<evidence type="ECO:0000250" key="1">
    <source>
        <dbReference type="UniProtKB" id="P23301"/>
    </source>
</evidence>
<evidence type="ECO:0000250" key="2">
    <source>
        <dbReference type="UniProtKB" id="P63241"/>
    </source>
</evidence>
<evidence type="ECO:0000250" key="3">
    <source>
        <dbReference type="UniProtKB" id="Q6NX89"/>
    </source>
</evidence>
<evidence type="ECO:0000269" key="4">
    <source>
    </source>
</evidence>
<evidence type="ECO:0000269" key="5">
    <source>
    </source>
</evidence>
<evidence type="ECO:0000305" key="6"/>
<evidence type="ECO:0000312" key="7">
    <source>
        <dbReference type="MGI" id="MGI:106248"/>
    </source>
</evidence>
<evidence type="ECO:0007744" key="8">
    <source>
    </source>
</evidence>
<feature type="initiator methionine" description="Removed" evidence="2">
    <location>
        <position position="1"/>
    </location>
</feature>
<feature type="chain" id="PRO_0000142452" description="Eukaryotic translation initiation factor 5A-1">
    <location>
        <begin position="2"/>
        <end position="154"/>
    </location>
</feature>
<feature type="region of interest" description="Nuclear localization regulation" evidence="5">
    <location>
        <begin position="2"/>
        <end position="19"/>
    </location>
</feature>
<feature type="modified residue" description="N-acetylalanine" evidence="2">
    <location>
        <position position="2"/>
    </location>
</feature>
<feature type="modified residue" description="N6-acetyllysine" evidence="2">
    <location>
        <position position="47"/>
    </location>
</feature>
<feature type="modified residue" description="Hypusine" evidence="2">
    <location>
        <position position="50"/>
    </location>
</feature>
<feature type="modified residue" description="N6-acetyllysine" evidence="8">
    <location>
        <position position="121"/>
    </location>
</feature>
<feature type="sequence conflict" description="In Ref. 2; BAB27641." evidence="6" ref="2">
    <original>E</original>
    <variation>Y</variation>
    <location>
        <position position="8"/>
    </location>
</feature>
<feature type="sequence conflict" description="In Ref. 2; BAB27641." evidence="6" ref="2">
    <original>A</original>
    <variation>S</variation>
    <location>
        <position position="16"/>
    </location>
</feature>
<feature type="sequence conflict" description="In Ref. 2; BAB27641." evidence="6" ref="2">
    <original>S</original>
    <variation>F</variation>
    <location>
        <position position="139"/>
    </location>
</feature>
<feature type="sequence conflict" description="In Ref. 2; BAB27641." evidence="6" ref="2">
    <original>E</original>
    <variation>K</variation>
    <location>
        <position position="143"/>
    </location>
</feature>
<accession>P63242</accession>
<accession>P10159</accession>
<accession>Q16182</accession>
<accession>Q5NCX0</accession>
<accession>Q78NR3</accession>
<accession>Q9D0G2</accession>
<reference key="1">
    <citation type="submission" date="2002-07" db="EMBL/GenBank/DDBJ databases">
        <title>Mouse eIF5A, genes and mRNAs.</title>
        <authorList>
            <person name="Jenkins Z.A."/>
            <person name="Johansson H.E."/>
        </authorList>
    </citation>
    <scope>NUCLEOTIDE SEQUENCE [MRNA]</scope>
    <source>
        <strain>BALB/cJ</strain>
    </source>
</reference>
<reference key="2">
    <citation type="journal article" date="2005" name="Science">
        <title>The transcriptional landscape of the mammalian genome.</title>
        <authorList>
            <person name="Carninci P."/>
            <person name="Kasukawa T."/>
            <person name="Katayama S."/>
            <person name="Gough J."/>
            <person name="Frith M.C."/>
            <person name="Maeda N."/>
            <person name="Oyama R."/>
            <person name="Ravasi T."/>
            <person name="Lenhard B."/>
            <person name="Wells C."/>
            <person name="Kodzius R."/>
            <person name="Shimokawa K."/>
            <person name="Bajic V.B."/>
            <person name="Brenner S.E."/>
            <person name="Batalov S."/>
            <person name="Forrest A.R."/>
            <person name="Zavolan M."/>
            <person name="Davis M.J."/>
            <person name="Wilming L.G."/>
            <person name="Aidinis V."/>
            <person name="Allen J.E."/>
            <person name="Ambesi-Impiombato A."/>
            <person name="Apweiler R."/>
            <person name="Aturaliya R.N."/>
            <person name="Bailey T.L."/>
            <person name="Bansal M."/>
            <person name="Baxter L."/>
            <person name="Beisel K.W."/>
            <person name="Bersano T."/>
            <person name="Bono H."/>
            <person name="Chalk A.M."/>
            <person name="Chiu K.P."/>
            <person name="Choudhary V."/>
            <person name="Christoffels A."/>
            <person name="Clutterbuck D.R."/>
            <person name="Crowe M.L."/>
            <person name="Dalla E."/>
            <person name="Dalrymple B.P."/>
            <person name="de Bono B."/>
            <person name="Della Gatta G."/>
            <person name="di Bernardo D."/>
            <person name="Down T."/>
            <person name="Engstrom P."/>
            <person name="Fagiolini M."/>
            <person name="Faulkner G."/>
            <person name="Fletcher C.F."/>
            <person name="Fukushima T."/>
            <person name="Furuno M."/>
            <person name="Futaki S."/>
            <person name="Gariboldi M."/>
            <person name="Georgii-Hemming P."/>
            <person name="Gingeras T.R."/>
            <person name="Gojobori T."/>
            <person name="Green R.E."/>
            <person name="Gustincich S."/>
            <person name="Harbers M."/>
            <person name="Hayashi Y."/>
            <person name="Hensch T.K."/>
            <person name="Hirokawa N."/>
            <person name="Hill D."/>
            <person name="Huminiecki L."/>
            <person name="Iacono M."/>
            <person name="Ikeo K."/>
            <person name="Iwama A."/>
            <person name="Ishikawa T."/>
            <person name="Jakt M."/>
            <person name="Kanapin A."/>
            <person name="Katoh M."/>
            <person name="Kawasawa Y."/>
            <person name="Kelso J."/>
            <person name="Kitamura H."/>
            <person name="Kitano H."/>
            <person name="Kollias G."/>
            <person name="Krishnan S.P."/>
            <person name="Kruger A."/>
            <person name="Kummerfeld S.K."/>
            <person name="Kurochkin I.V."/>
            <person name="Lareau L.F."/>
            <person name="Lazarevic D."/>
            <person name="Lipovich L."/>
            <person name="Liu J."/>
            <person name="Liuni S."/>
            <person name="McWilliam S."/>
            <person name="Madan Babu M."/>
            <person name="Madera M."/>
            <person name="Marchionni L."/>
            <person name="Matsuda H."/>
            <person name="Matsuzawa S."/>
            <person name="Miki H."/>
            <person name="Mignone F."/>
            <person name="Miyake S."/>
            <person name="Morris K."/>
            <person name="Mottagui-Tabar S."/>
            <person name="Mulder N."/>
            <person name="Nakano N."/>
            <person name="Nakauchi H."/>
            <person name="Ng P."/>
            <person name="Nilsson R."/>
            <person name="Nishiguchi S."/>
            <person name="Nishikawa S."/>
            <person name="Nori F."/>
            <person name="Ohara O."/>
            <person name="Okazaki Y."/>
            <person name="Orlando V."/>
            <person name="Pang K.C."/>
            <person name="Pavan W.J."/>
            <person name="Pavesi G."/>
            <person name="Pesole G."/>
            <person name="Petrovsky N."/>
            <person name="Piazza S."/>
            <person name="Reed J."/>
            <person name="Reid J.F."/>
            <person name="Ring B.Z."/>
            <person name="Ringwald M."/>
            <person name="Rost B."/>
            <person name="Ruan Y."/>
            <person name="Salzberg S.L."/>
            <person name="Sandelin A."/>
            <person name="Schneider C."/>
            <person name="Schoenbach C."/>
            <person name="Sekiguchi K."/>
            <person name="Semple C.A."/>
            <person name="Seno S."/>
            <person name="Sessa L."/>
            <person name="Sheng Y."/>
            <person name="Shibata Y."/>
            <person name="Shimada H."/>
            <person name="Shimada K."/>
            <person name="Silva D."/>
            <person name="Sinclair B."/>
            <person name="Sperling S."/>
            <person name="Stupka E."/>
            <person name="Sugiura K."/>
            <person name="Sultana R."/>
            <person name="Takenaka Y."/>
            <person name="Taki K."/>
            <person name="Tammoja K."/>
            <person name="Tan S.L."/>
            <person name="Tang S."/>
            <person name="Taylor M.S."/>
            <person name="Tegner J."/>
            <person name="Teichmann S.A."/>
            <person name="Ueda H.R."/>
            <person name="van Nimwegen E."/>
            <person name="Verardo R."/>
            <person name="Wei C.L."/>
            <person name="Yagi K."/>
            <person name="Yamanishi H."/>
            <person name="Zabarovsky E."/>
            <person name="Zhu S."/>
            <person name="Zimmer A."/>
            <person name="Hide W."/>
            <person name="Bult C."/>
            <person name="Grimmond S.M."/>
            <person name="Teasdale R.D."/>
            <person name="Liu E.T."/>
            <person name="Brusic V."/>
            <person name="Quackenbush J."/>
            <person name="Wahlestedt C."/>
            <person name="Mattick J.S."/>
            <person name="Hume D.A."/>
            <person name="Kai C."/>
            <person name="Sasaki D."/>
            <person name="Tomaru Y."/>
            <person name="Fukuda S."/>
            <person name="Kanamori-Katayama M."/>
            <person name="Suzuki M."/>
            <person name="Aoki J."/>
            <person name="Arakawa T."/>
            <person name="Iida J."/>
            <person name="Imamura K."/>
            <person name="Itoh M."/>
            <person name="Kato T."/>
            <person name="Kawaji H."/>
            <person name="Kawagashira N."/>
            <person name="Kawashima T."/>
            <person name="Kojima M."/>
            <person name="Kondo S."/>
            <person name="Konno H."/>
            <person name="Nakano K."/>
            <person name="Ninomiya N."/>
            <person name="Nishio T."/>
            <person name="Okada M."/>
            <person name="Plessy C."/>
            <person name="Shibata K."/>
            <person name="Shiraki T."/>
            <person name="Suzuki S."/>
            <person name="Tagami M."/>
            <person name="Waki K."/>
            <person name="Watahiki A."/>
            <person name="Okamura-Oho Y."/>
            <person name="Suzuki H."/>
            <person name="Kawai J."/>
            <person name="Hayashizaki Y."/>
        </authorList>
    </citation>
    <scope>NUCLEOTIDE SEQUENCE [LARGE SCALE MRNA]</scope>
    <source>
        <strain>C57BL/6J</strain>
        <tissue>Bone marrow</tissue>
        <tissue>Embryo</tissue>
    </source>
</reference>
<reference key="3">
    <citation type="journal article" date="2009" name="PLoS Biol.">
        <title>Lineage-specific biology revealed by a finished genome assembly of the mouse.</title>
        <authorList>
            <person name="Church D.M."/>
            <person name="Goodstadt L."/>
            <person name="Hillier L.W."/>
            <person name="Zody M.C."/>
            <person name="Goldstein S."/>
            <person name="She X."/>
            <person name="Bult C.J."/>
            <person name="Agarwala R."/>
            <person name="Cherry J.L."/>
            <person name="DiCuccio M."/>
            <person name="Hlavina W."/>
            <person name="Kapustin Y."/>
            <person name="Meric P."/>
            <person name="Maglott D."/>
            <person name="Birtle Z."/>
            <person name="Marques A.C."/>
            <person name="Graves T."/>
            <person name="Zhou S."/>
            <person name="Teague B."/>
            <person name="Potamousis K."/>
            <person name="Churas C."/>
            <person name="Place M."/>
            <person name="Herschleb J."/>
            <person name="Runnheim R."/>
            <person name="Forrest D."/>
            <person name="Amos-Landgraf J."/>
            <person name="Schwartz D.C."/>
            <person name="Cheng Z."/>
            <person name="Lindblad-Toh K."/>
            <person name="Eichler E.E."/>
            <person name="Ponting C.P."/>
        </authorList>
    </citation>
    <scope>NUCLEOTIDE SEQUENCE [LARGE SCALE GENOMIC DNA]</scope>
    <source>
        <strain>C57BL/6J</strain>
    </source>
</reference>
<reference key="4">
    <citation type="journal article" date="2004" name="Genome Res.">
        <title>The status, quality, and expansion of the NIH full-length cDNA project: the Mammalian Gene Collection (MGC).</title>
        <authorList>
            <consortium name="The MGC Project Team"/>
        </authorList>
    </citation>
    <scope>NUCLEOTIDE SEQUENCE [LARGE SCALE MRNA]</scope>
    <source>
        <strain>FVB/N</strain>
        <tissue>Mammary gland</tissue>
    </source>
</reference>
<reference key="5">
    <citation type="submission" date="2007-07" db="UniProtKB">
        <authorList>
            <person name="Lubec G."/>
            <person name="Klug S."/>
            <person name="Yang J.W."/>
            <person name="Zigmond M."/>
        </authorList>
    </citation>
    <scope>PROTEIN SEQUENCE OF 56-67 AND 87-109</scope>
    <scope>IDENTIFICATION BY MASS SPECTROMETRY</scope>
    <source>
        <tissue>Brain</tissue>
        <tissue>Hippocampus</tissue>
    </source>
</reference>
<reference key="6">
    <citation type="journal article" date="2005" name="Biochem. J.">
        <title>Independent roles of eIF5A and polyamines in cell proliferation.</title>
        <authorList>
            <person name="Nishimura K."/>
            <person name="Murozumi K."/>
            <person name="Shirahata A."/>
            <person name="Park M.H."/>
            <person name="Kashiwagi K."/>
            <person name="Igarashi K."/>
        </authorList>
    </citation>
    <scope>FUNCTION</scope>
    <scope>HYPUSINE</scope>
</reference>
<reference key="7">
    <citation type="journal article" date="2007" name="Biochem. Biophys. Res. Commun.">
        <title>The N-terminal region of eukaryotic translation initiation factor 5A signals to nuclear localization of the protein.</title>
        <authorList>
            <person name="Parreiras-E-Silva L.T."/>
            <person name="Gomes M.D."/>
            <person name="Oliveira E.B."/>
            <person name="Costa-Neto C.M."/>
        </authorList>
    </citation>
    <scope>SUBCELLULAR LOCATION</scope>
</reference>
<reference key="8">
    <citation type="journal article" date="2010" name="Cell">
        <title>A tissue-specific atlas of mouse protein phosphorylation and expression.</title>
        <authorList>
            <person name="Huttlin E.L."/>
            <person name="Jedrychowski M.P."/>
            <person name="Elias J.E."/>
            <person name="Goswami T."/>
            <person name="Rad R."/>
            <person name="Beausoleil S.A."/>
            <person name="Villen J."/>
            <person name="Haas W."/>
            <person name="Sowa M.E."/>
            <person name="Gygi S.P."/>
        </authorList>
    </citation>
    <scope>IDENTIFICATION BY MASS SPECTROMETRY [LARGE SCALE ANALYSIS]</scope>
    <source>
        <tissue>Brain</tissue>
        <tissue>Brown adipose tissue</tissue>
        <tissue>Heart</tissue>
        <tissue>Kidney</tissue>
        <tissue>Liver</tissue>
        <tissue>Lung</tissue>
        <tissue>Pancreas</tissue>
        <tissue>Spleen</tissue>
        <tissue>Testis</tissue>
    </source>
</reference>
<reference key="9">
    <citation type="journal article" date="2013" name="Mol. Cell">
        <title>SIRT5-mediated lysine desuccinylation impacts diverse metabolic pathways.</title>
        <authorList>
            <person name="Park J."/>
            <person name="Chen Y."/>
            <person name="Tishkoff D.X."/>
            <person name="Peng C."/>
            <person name="Tan M."/>
            <person name="Dai L."/>
            <person name="Xie Z."/>
            <person name="Zhang Y."/>
            <person name="Zwaans B.M."/>
            <person name="Skinner M.E."/>
            <person name="Lombard D.B."/>
            <person name="Zhao Y."/>
        </authorList>
    </citation>
    <scope>ACETYLATION [LARGE SCALE ANALYSIS] AT LYS-121</scope>
    <scope>IDENTIFICATION BY MASS SPECTROMETRY [LARGE SCALE ANALYSIS]</scope>
    <source>
        <tissue>Embryonic fibroblast</tissue>
    </source>
</reference>
<proteinExistence type="evidence at protein level"/>
<gene>
    <name evidence="7" type="primary">Eif5a</name>
</gene>
<organism>
    <name type="scientific">Mus musculus</name>
    <name type="common">Mouse</name>
    <dbReference type="NCBI Taxonomy" id="10090"/>
    <lineage>
        <taxon>Eukaryota</taxon>
        <taxon>Metazoa</taxon>
        <taxon>Chordata</taxon>
        <taxon>Craniata</taxon>
        <taxon>Vertebrata</taxon>
        <taxon>Euteleostomi</taxon>
        <taxon>Mammalia</taxon>
        <taxon>Eutheria</taxon>
        <taxon>Euarchontoglires</taxon>
        <taxon>Glires</taxon>
        <taxon>Rodentia</taxon>
        <taxon>Myomorpha</taxon>
        <taxon>Muroidea</taxon>
        <taxon>Muridae</taxon>
        <taxon>Murinae</taxon>
        <taxon>Mus</taxon>
        <taxon>Mus</taxon>
    </lineage>
</organism>
<protein>
    <recommendedName>
        <fullName evidence="6">Eukaryotic translation initiation factor 5A-1</fullName>
        <shortName>eIF-5A-1</shortName>
        <shortName>eIF-5A1</shortName>
    </recommendedName>
    <alternativeName>
        <fullName>Eukaryotic initiation factor 5A isoform 1</fullName>
        <shortName>eIF-5A</shortName>
    </alternativeName>
    <alternativeName>
        <fullName>eIF-4D</fullName>
    </alternativeName>
</protein>
<dbReference type="EMBL" id="AY129323">
    <property type="protein sequence ID" value="AAN17521.1"/>
    <property type="molecule type" value="mRNA"/>
</dbReference>
<dbReference type="EMBL" id="AY129324">
    <property type="protein sequence ID" value="AAN17527.1"/>
    <property type="molecule type" value="mRNA"/>
</dbReference>
<dbReference type="EMBL" id="AY129325">
    <property type="protein sequence ID" value="AAN17528.1"/>
    <property type="molecule type" value="mRNA"/>
</dbReference>
<dbReference type="EMBL" id="AY129326">
    <property type="protein sequence ID" value="AAN17532.1"/>
    <property type="molecule type" value="mRNA"/>
</dbReference>
<dbReference type="EMBL" id="AY129327">
    <property type="protein sequence ID" value="AAN17534.1"/>
    <property type="molecule type" value="mRNA"/>
</dbReference>
<dbReference type="EMBL" id="AY129328">
    <property type="protein sequence ID" value="AAN17535.1"/>
    <property type="molecule type" value="mRNA"/>
</dbReference>
<dbReference type="EMBL" id="AY129329">
    <property type="protein sequence ID" value="AAN17539.1"/>
    <property type="molecule type" value="mRNA"/>
</dbReference>
<dbReference type="EMBL" id="AK011306">
    <property type="protein sequence ID" value="BAB27532.1"/>
    <property type="molecule type" value="mRNA"/>
</dbReference>
<dbReference type="EMBL" id="AK011470">
    <property type="protein sequence ID" value="BAB27641.1"/>
    <property type="molecule type" value="mRNA"/>
</dbReference>
<dbReference type="EMBL" id="AK149705">
    <property type="protein sequence ID" value="BAE29039.1"/>
    <property type="molecule type" value="mRNA"/>
</dbReference>
<dbReference type="EMBL" id="AL596185">
    <property type="protein sequence ID" value="CAI35153.1"/>
    <property type="molecule type" value="Genomic_DNA"/>
</dbReference>
<dbReference type="EMBL" id="AL596185">
    <property type="protein sequence ID" value="CAI35154.1"/>
    <property type="status" value="ALT_SEQ"/>
    <property type="molecule type" value="Genomic_DNA"/>
</dbReference>
<dbReference type="EMBL" id="BC003889">
    <property type="protein sequence ID" value="AAH03889.1"/>
    <property type="molecule type" value="mRNA"/>
</dbReference>
<dbReference type="EMBL" id="BC008093">
    <property type="protein sequence ID" value="AAH08093.1"/>
    <property type="molecule type" value="mRNA"/>
</dbReference>
<dbReference type="EMBL" id="BC024899">
    <property type="protein sequence ID" value="AAH24899.1"/>
    <property type="molecule type" value="mRNA"/>
</dbReference>
<dbReference type="CCDS" id="CCDS24923.1"/>
<dbReference type="RefSeq" id="NP_001160061.1">
    <property type="nucleotide sequence ID" value="NM_001166589.1"/>
</dbReference>
<dbReference type="RefSeq" id="NP_001160062.1">
    <property type="nucleotide sequence ID" value="NM_001166590.1"/>
</dbReference>
<dbReference type="RefSeq" id="NP_001160063.1">
    <property type="nucleotide sequence ID" value="NM_001166591.1"/>
</dbReference>
<dbReference type="RefSeq" id="NP_001160064.1">
    <property type="nucleotide sequence ID" value="NM_001166592.1"/>
</dbReference>
<dbReference type="RefSeq" id="NP_001160065.1">
    <property type="nucleotide sequence ID" value="NM_001166593.1"/>
</dbReference>
<dbReference type="RefSeq" id="NP_001160066.1">
    <property type="nucleotide sequence ID" value="NM_001166594.1"/>
</dbReference>
<dbReference type="RefSeq" id="NP_001160067.1">
    <property type="nucleotide sequence ID" value="NM_001166595.1"/>
</dbReference>
<dbReference type="RefSeq" id="NP_001160068.1">
    <property type="nucleotide sequence ID" value="NM_001166596.1"/>
</dbReference>
<dbReference type="RefSeq" id="NP_853613.1">
    <property type="nucleotide sequence ID" value="NM_181582.4"/>
</dbReference>
<dbReference type="RefSeq" id="XP_011247360.1">
    <property type="nucleotide sequence ID" value="XM_011249058.4"/>
</dbReference>
<dbReference type="RefSeq" id="XP_030101910.1">
    <property type="nucleotide sequence ID" value="XM_030246050.2"/>
</dbReference>
<dbReference type="RefSeq" id="XP_030101911.1">
    <property type="nucleotide sequence ID" value="XM_030246051.1"/>
</dbReference>
<dbReference type="RefSeq" id="XP_036012632.1">
    <property type="nucleotide sequence ID" value="XM_036156739.1"/>
</dbReference>
<dbReference type="BMRB" id="P63242"/>
<dbReference type="SMR" id="P63242"/>
<dbReference type="BioGRID" id="234898">
    <property type="interactions" value="72"/>
</dbReference>
<dbReference type="FunCoup" id="P63242">
    <property type="interactions" value="2143"/>
</dbReference>
<dbReference type="IntAct" id="P63242">
    <property type="interactions" value="4"/>
</dbReference>
<dbReference type="MINT" id="P63242"/>
<dbReference type="STRING" id="10090.ENSMUSP00000047008"/>
<dbReference type="GlyGen" id="P63242">
    <property type="glycosylation" value="1 site, 1 O-linked glycan (1 site)"/>
</dbReference>
<dbReference type="iPTMnet" id="P63242"/>
<dbReference type="PhosphoSitePlus" id="P63242"/>
<dbReference type="SwissPalm" id="P63242"/>
<dbReference type="REPRODUCTION-2DPAGE" id="P63242"/>
<dbReference type="jPOST" id="P63242"/>
<dbReference type="PaxDb" id="10090-ENSMUSP00000047008"/>
<dbReference type="PeptideAtlas" id="P63242"/>
<dbReference type="ProteomicsDB" id="267265"/>
<dbReference type="Pumba" id="P63242"/>
<dbReference type="TopDownProteomics" id="P63242"/>
<dbReference type="DNASU" id="276770"/>
<dbReference type="Ensembl" id="ENSMUST00000043419.10">
    <property type="protein sequence ID" value="ENSMUSP00000047008.4"/>
    <property type="gene ID" value="ENSMUSG00000078812.11"/>
</dbReference>
<dbReference type="Ensembl" id="ENSMUST00000070996.11">
    <property type="protein sequence ID" value="ENSMUSP00000067077.5"/>
    <property type="gene ID" value="ENSMUSG00000078812.11"/>
</dbReference>
<dbReference type="Ensembl" id="ENSMUST00000071026.10">
    <property type="protein sequence ID" value="ENSMUSP00000068651.4"/>
    <property type="gene ID" value="ENSMUSG00000078812.11"/>
</dbReference>
<dbReference type="Ensembl" id="ENSMUST00000108607.8">
    <property type="protein sequence ID" value="ENSMUSP00000104247.2"/>
    <property type="gene ID" value="ENSMUSG00000078812.11"/>
</dbReference>
<dbReference type="Ensembl" id="ENSMUST00000108608.8">
    <property type="protein sequence ID" value="ENSMUSP00000104248.2"/>
    <property type="gene ID" value="ENSMUSG00000078812.11"/>
</dbReference>
<dbReference type="Ensembl" id="ENSMUST00000108609.8">
    <property type="protein sequence ID" value="ENSMUSP00000104249.2"/>
    <property type="gene ID" value="ENSMUSG00000078812.11"/>
</dbReference>
<dbReference type="Ensembl" id="ENSMUST00000108610.8">
    <property type="protein sequence ID" value="ENSMUSP00000104250.2"/>
    <property type="gene ID" value="ENSMUSG00000078812.11"/>
</dbReference>
<dbReference type="Ensembl" id="ENSMUST00000108611.8">
    <property type="protein sequence ID" value="ENSMUSP00000104251.2"/>
    <property type="gene ID" value="ENSMUSG00000078812.11"/>
</dbReference>
<dbReference type="Ensembl" id="ENSMUST00000108612.8">
    <property type="protein sequence ID" value="ENSMUSP00000104252.2"/>
    <property type="gene ID" value="ENSMUSG00000078812.11"/>
</dbReference>
<dbReference type="Ensembl" id="ENSMUST00000108613.10">
    <property type="protein sequence ID" value="ENSMUSP00000104253.4"/>
    <property type="gene ID" value="ENSMUSG00000078812.11"/>
</dbReference>
<dbReference type="Ensembl" id="ENSMUST00000164359.8">
    <property type="protein sequence ID" value="ENSMUSP00000132717.2"/>
    <property type="gene ID" value="ENSMUSG00000078812.11"/>
</dbReference>
<dbReference type="GeneID" id="276770"/>
<dbReference type="KEGG" id="mmu:276770"/>
<dbReference type="UCSC" id="uc007jsq.2">
    <property type="organism name" value="mouse"/>
</dbReference>
<dbReference type="AGR" id="MGI:106248"/>
<dbReference type="CTD" id="1984"/>
<dbReference type="MGI" id="MGI:106248">
    <property type="gene designation" value="Eif5a"/>
</dbReference>
<dbReference type="VEuPathDB" id="HostDB:ENSMUSG00000078812"/>
<dbReference type="eggNOG" id="KOG3271">
    <property type="taxonomic scope" value="Eukaryota"/>
</dbReference>
<dbReference type="GeneTree" id="ENSGT00390000003738"/>
<dbReference type="InParanoid" id="P63242"/>
<dbReference type="OMA" id="KDDVRMP"/>
<dbReference type="OrthoDB" id="9975114at2759"/>
<dbReference type="PhylomeDB" id="P63242"/>
<dbReference type="TreeFam" id="TF101534"/>
<dbReference type="Reactome" id="R-MMU-204626">
    <property type="pathway name" value="Hypusine synthesis from eIF5A-lysine"/>
</dbReference>
<dbReference type="BioGRID-ORCS" id="276770">
    <property type="hits" value="26 hits in 77 CRISPR screens"/>
</dbReference>
<dbReference type="ChiTaRS" id="Eif5a">
    <property type="organism name" value="mouse"/>
</dbReference>
<dbReference type="PRO" id="PR:P63242"/>
<dbReference type="Proteomes" id="UP000000589">
    <property type="component" value="Chromosome 11"/>
</dbReference>
<dbReference type="RNAct" id="P63242">
    <property type="molecule type" value="protein"/>
</dbReference>
<dbReference type="Bgee" id="ENSMUSG00000078812">
    <property type="expression patterns" value="Expressed in presomitic mesoderm and 243 other cell types or tissues"/>
</dbReference>
<dbReference type="ExpressionAtlas" id="P63242">
    <property type="expression patterns" value="baseline and differential"/>
</dbReference>
<dbReference type="GO" id="GO:0005642">
    <property type="term" value="C:annulate lamellae"/>
    <property type="evidence" value="ECO:0007669"/>
    <property type="project" value="Ensembl"/>
</dbReference>
<dbReference type="GO" id="GO:0005737">
    <property type="term" value="C:cytoplasm"/>
    <property type="evidence" value="ECO:0000314"/>
    <property type="project" value="MGI"/>
</dbReference>
<dbReference type="GO" id="GO:0005789">
    <property type="term" value="C:endoplasmic reticulum membrane"/>
    <property type="evidence" value="ECO:0007669"/>
    <property type="project" value="UniProtKB-SubCell"/>
</dbReference>
<dbReference type="GO" id="GO:0005643">
    <property type="term" value="C:nuclear pore"/>
    <property type="evidence" value="ECO:0007669"/>
    <property type="project" value="Ensembl"/>
</dbReference>
<dbReference type="GO" id="GO:0005634">
    <property type="term" value="C:nucleus"/>
    <property type="evidence" value="ECO:0000314"/>
    <property type="project" value="MGI"/>
</dbReference>
<dbReference type="GO" id="GO:0045202">
    <property type="term" value="C:synapse"/>
    <property type="evidence" value="ECO:0000314"/>
    <property type="project" value="SynGO"/>
</dbReference>
<dbReference type="GO" id="GO:0043022">
    <property type="term" value="F:ribosome binding"/>
    <property type="evidence" value="ECO:0007669"/>
    <property type="project" value="InterPro"/>
</dbReference>
<dbReference type="GO" id="GO:0003746">
    <property type="term" value="F:translation elongation factor activity"/>
    <property type="evidence" value="ECO:0007669"/>
    <property type="project" value="UniProtKB-KW"/>
</dbReference>
<dbReference type="GO" id="GO:0017070">
    <property type="term" value="F:U6 snRNA binding"/>
    <property type="evidence" value="ECO:0007669"/>
    <property type="project" value="Ensembl"/>
</dbReference>
<dbReference type="GO" id="GO:0098586">
    <property type="term" value="P:cellular response to virus"/>
    <property type="evidence" value="ECO:0007669"/>
    <property type="project" value="Ensembl"/>
</dbReference>
<dbReference type="GO" id="GO:0043065">
    <property type="term" value="P:positive regulation of apoptotic process"/>
    <property type="evidence" value="ECO:0000314"/>
    <property type="project" value="MGI"/>
</dbReference>
<dbReference type="GO" id="GO:1902255">
    <property type="term" value="P:positive regulation of intrinsic apoptotic signaling pathway by p53 class mediator"/>
    <property type="evidence" value="ECO:0007669"/>
    <property type="project" value="Ensembl"/>
</dbReference>
<dbReference type="GO" id="GO:0045944">
    <property type="term" value="P:positive regulation of transcription by RNA polymerase II"/>
    <property type="evidence" value="ECO:0007669"/>
    <property type="project" value="Ensembl"/>
</dbReference>
<dbReference type="GO" id="GO:0045901">
    <property type="term" value="P:positive regulation of translational elongation"/>
    <property type="evidence" value="ECO:0007669"/>
    <property type="project" value="InterPro"/>
</dbReference>
<dbReference type="GO" id="GO:0045905">
    <property type="term" value="P:positive regulation of translational termination"/>
    <property type="evidence" value="ECO:0007669"/>
    <property type="project" value="InterPro"/>
</dbReference>
<dbReference type="GO" id="GO:0006414">
    <property type="term" value="P:translational elongation"/>
    <property type="evidence" value="ECO:0000250"/>
    <property type="project" value="UniProtKB"/>
</dbReference>
<dbReference type="GO" id="GO:0033209">
    <property type="term" value="P:tumor necrosis factor-mediated signaling pathway"/>
    <property type="evidence" value="ECO:0007669"/>
    <property type="project" value="Ensembl"/>
</dbReference>
<dbReference type="CDD" id="cd04468">
    <property type="entry name" value="S1_eIF5A"/>
    <property type="match status" value="1"/>
</dbReference>
<dbReference type="FunFam" id="2.30.30.30:FF:000007">
    <property type="entry name" value="Eukaryotic translation initiation factor 5A"/>
    <property type="match status" value="1"/>
</dbReference>
<dbReference type="FunFam" id="2.40.50.140:FF:000034">
    <property type="entry name" value="Eukaryotic translation initiation factor 5A"/>
    <property type="match status" value="1"/>
</dbReference>
<dbReference type="Gene3D" id="2.30.30.30">
    <property type="match status" value="1"/>
</dbReference>
<dbReference type="Gene3D" id="2.40.50.140">
    <property type="entry name" value="Nucleic acid-binding proteins"/>
    <property type="match status" value="1"/>
</dbReference>
<dbReference type="InterPro" id="IPR001884">
    <property type="entry name" value="IF5A-like"/>
</dbReference>
<dbReference type="InterPro" id="IPR048670">
    <property type="entry name" value="IF5A-like_N"/>
</dbReference>
<dbReference type="InterPro" id="IPR012340">
    <property type="entry name" value="NA-bd_OB-fold"/>
</dbReference>
<dbReference type="InterPro" id="IPR014722">
    <property type="entry name" value="Rib_uL2_dom2"/>
</dbReference>
<dbReference type="InterPro" id="IPR019769">
    <property type="entry name" value="Trans_elong_IF5A_hypusine_site"/>
</dbReference>
<dbReference type="InterPro" id="IPR020189">
    <property type="entry name" value="Transl_elong_IF5A_C"/>
</dbReference>
<dbReference type="InterPro" id="IPR008991">
    <property type="entry name" value="Translation_prot_SH3-like_sf"/>
</dbReference>
<dbReference type="NCBIfam" id="TIGR00037">
    <property type="entry name" value="eIF_5A"/>
    <property type="match status" value="1"/>
</dbReference>
<dbReference type="PANTHER" id="PTHR11673">
    <property type="entry name" value="TRANSLATION INITIATION FACTOR 5A FAMILY MEMBER"/>
    <property type="match status" value="1"/>
</dbReference>
<dbReference type="Pfam" id="PF01287">
    <property type="entry name" value="eIF-5a"/>
    <property type="match status" value="1"/>
</dbReference>
<dbReference type="Pfam" id="PF21485">
    <property type="entry name" value="IF5A-like_N"/>
    <property type="match status" value="1"/>
</dbReference>
<dbReference type="PIRSF" id="PIRSF003025">
    <property type="entry name" value="eIF5A"/>
    <property type="match status" value="1"/>
</dbReference>
<dbReference type="SMART" id="SM01376">
    <property type="entry name" value="eIF-5a"/>
    <property type="match status" value="1"/>
</dbReference>
<dbReference type="SUPFAM" id="SSF50249">
    <property type="entry name" value="Nucleic acid-binding proteins"/>
    <property type="match status" value="1"/>
</dbReference>
<dbReference type="SUPFAM" id="SSF50104">
    <property type="entry name" value="Translation proteins SH3-like domain"/>
    <property type="match status" value="1"/>
</dbReference>
<dbReference type="PROSITE" id="PS00302">
    <property type="entry name" value="IF5A_HYPUSINE"/>
    <property type="match status" value="1"/>
</dbReference>
<comment type="function">
    <text evidence="1 2 4">Translation factor that promotes translation elongation and termination, particularly upon ribosome stalling at specific amino acid sequence contexts (By similarity). Binds between the exit (E) and peptidyl (P) site of the ribosome and promotes rescue of stalled ribosome: specifically required for efficient translation of polyproline-containing peptides as well as other motifs that stall the ribosome (By similarity). Acts as a ribosome quality control (RQC) cofactor by joining the RQC complex to facilitate peptidyl transfer during CAT tailing step (By similarity). Also involved in actin dynamics and cell cycle progression, mRNA decay and probably in a pathway involved in stress response and maintenance of cell wall integrity (By similarity). With syntenin SDCBP, functions as a regulator of p53/TP53 and p53/TP53-dependent apoptosis (By similarity). Also regulates TNF-alpha-mediated apoptosis (By similarity). Mediates effects of polyamines on neuronal process extension and survival (PubMed:15377278). Is required for autophagy by assisting the ribosome in translating the ATG3 protein at a specific amino acid sequence, the 'ASP-ASP-Gly' motif, leading to the increase of the efficiency of ATG3 translation and facilitation of LC3B lipidation and autophagosome formation (By similarity).</text>
</comment>
<comment type="subunit">
    <text evidence="2 3">Binds to 80S ribosomes. Actively translating ribosomes show mutually exclusive binding of eIF5a (EIF5A or EIF5A2) and EEF2/eEF2 (By similarity). Interacts with DAPL1; interaction takes place at the polypeptide exit tunnel of hibernating ribosomes and prevents translation (By similarity). Interacts with DHPS. Interacts with SDCBP. Interacts with DOHH (By similarity).</text>
</comment>
<comment type="subcellular location">
    <subcellularLocation>
        <location evidence="5">Cytoplasm</location>
    </subcellularLocation>
    <subcellularLocation>
        <location evidence="5">Nucleus</location>
    </subcellularLocation>
    <subcellularLocation>
        <location evidence="2">Endoplasmic reticulum membrane</location>
        <topology evidence="2">Peripheral membrane protein</topology>
        <orientation evidence="2">Cytoplasmic side</orientation>
    </subcellularLocation>
    <text evidence="2">Hypusine modification promotes the nuclear export and cytoplasmic localization and there was a dynamic shift in the localization from predominantly cytoplasmic to primarily nuclear under apoptotic inducing conditions. Nuclear export of hypusinated protein is mediated by XPO4.</text>
</comment>
<comment type="PTM">
    <text evidence="2">Acetylated by PCAF/KAT2B, regulating its subcellular localization (By similarity). Deacetylated by SIRT2 (By similarity).</text>
</comment>
<comment type="PTM">
    <text evidence="4">Lys-50 undergoes hypusination, a unique post-translational modification that consists in the addition of a butylamino group from spermidine to lysine side chain, leading to the formation of the unusual amino acid hypusine. eIF-5As are the only known proteins to undergo this modification, which is essential for their function.</text>
</comment>
<comment type="similarity">
    <text evidence="6">Belongs to the eIF-5A family.</text>
</comment>
<comment type="sequence caution" evidence="6">
    <conflict type="erroneous gene model prediction">
        <sequence resource="EMBL-CDS" id="CAI35154"/>
    </conflict>
</comment>
<name>IF5A1_MOUSE</name>
<keyword id="KW-0007">Acetylation</keyword>
<keyword id="KW-0963">Cytoplasm</keyword>
<keyword id="KW-0903">Direct protein sequencing</keyword>
<keyword id="KW-0251">Elongation factor</keyword>
<keyword id="KW-0256">Endoplasmic reticulum</keyword>
<keyword id="KW-0385">Hypusine</keyword>
<keyword id="KW-0472">Membrane</keyword>
<keyword id="KW-0539">Nucleus</keyword>
<keyword id="KW-0648">Protein biosynthesis</keyword>
<keyword id="KW-1185">Reference proteome</keyword>
<keyword id="KW-0694">RNA-binding</keyword>
<sequence length="154" mass="16832">MADDLDFETGDAGASATFPMQCSALRKNGFVVLKGRPCKIVEMSTSKTGKHGHAKVHLVGIDIFTGKKYEDICPSTHNMDVPNIKRNDFQLIGIQDGYLSLLQDSGEVREDLRLPEGDLGKEIEQKYDCGEEILITVLSAMTEEAAVAIKAMAK</sequence>